<protein>
    <recommendedName>
        <fullName evidence="1">Peptidyl-tRNA hydrolase</fullName>
        <shortName evidence="1">Pth</shortName>
        <ecNumber evidence="1">3.1.1.29</ecNumber>
    </recommendedName>
</protein>
<feature type="chain" id="PRO_0000187856" description="Peptidyl-tRNA hydrolase">
    <location>
        <begin position="1"/>
        <end position="192"/>
    </location>
</feature>
<feature type="active site" description="Proton acceptor" evidence="1">
    <location>
        <position position="19"/>
    </location>
</feature>
<feature type="binding site" evidence="1">
    <location>
        <position position="14"/>
    </location>
    <ligand>
        <name>tRNA</name>
        <dbReference type="ChEBI" id="CHEBI:17843"/>
    </ligand>
</feature>
<feature type="binding site" evidence="1">
    <location>
        <position position="61"/>
    </location>
    <ligand>
        <name>tRNA</name>
        <dbReference type="ChEBI" id="CHEBI:17843"/>
    </ligand>
</feature>
<feature type="binding site" evidence="1">
    <location>
        <position position="63"/>
    </location>
    <ligand>
        <name>tRNA</name>
        <dbReference type="ChEBI" id="CHEBI:17843"/>
    </ligand>
</feature>
<feature type="binding site" evidence="1">
    <location>
        <position position="107"/>
    </location>
    <ligand>
        <name>tRNA</name>
        <dbReference type="ChEBI" id="CHEBI:17843"/>
    </ligand>
</feature>
<feature type="site" description="Discriminates between blocked and unblocked aminoacyl-tRNA" evidence="1">
    <location>
        <position position="9"/>
    </location>
</feature>
<feature type="site" description="Stabilizes the basic form of H active site to accept a proton" evidence="1">
    <location>
        <position position="86"/>
    </location>
</feature>
<name>PTH_WOLSU</name>
<evidence type="ECO:0000255" key="1">
    <source>
        <dbReference type="HAMAP-Rule" id="MF_00083"/>
    </source>
</evidence>
<sequence length="192" mass="21645">MVLVVGLGNPGKTYESTRHNIGFRVIDALLERRSALNATKSTFKGELHKEGENLFLKPTTYMNLSGESALPVSTFYKPEKILVIHDDLDLPFGAIRLKRGGGNGGHNGLKSLDKLLGNDYYRLRIGIGKPPLGWEVADYVLARFSQEEEQELEERLFPHAKEAIESFLEGKMEWDRLVSRYSLKPSTPKEKV</sequence>
<reference key="1">
    <citation type="journal article" date="2003" name="Proc. Natl. Acad. Sci. U.S.A.">
        <title>Complete genome sequence and analysis of Wolinella succinogenes.</title>
        <authorList>
            <person name="Baar C."/>
            <person name="Eppinger M."/>
            <person name="Raddatz G."/>
            <person name="Simon J."/>
            <person name="Lanz C."/>
            <person name="Klimmek O."/>
            <person name="Nandakumar R."/>
            <person name="Gross R."/>
            <person name="Rosinus A."/>
            <person name="Keller H."/>
            <person name="Jagtap P."/>
            <person name="Linke B."/>
            <person name="Meyer F."/>
            <person name="Lederer H."/>
            <person name="Schuster S.C."/>
        </authorList>
    </citation>
    <scope>NUCLEOTIDE SEQUENCE [LARGE SCALE GENOMIC DNA]</scope>
    <source>
        <strain>ATCC 29543 / DSM 1740 / CCUG 13145 / JCM 31913 / LMG 7466 / NCTC 11488 / FDC 602W</strain>
    </source>
</reference>
<gene>
    <name evidence="1" type="primary">pth</name>
    <name type="ordered locus">WS2078</name>
</gene>
<dbReference type="EC" id="3.1.1.29" evidence="1"/>
<dbReference type="EMBL" id="BX571662">
    <property type="protein sequence ID" value="CAE11077.1"/>
    <property type="molecule type" value="Genomic_DNA"/>
</dbReference>
<dbReference type="RefSeq" id="WP_011139859.1">
    <property type="nucleotide sequence ID" value="NC_005090.1"/>
</dbReference>
<dbReference type="SMR" id="Q7M7U8"/>
<dbReference type="STRING" id="273121.WS2078"/>
<dbReference type="KEGG" id="wsu:WS2078"/>
<dbReference type="eggNOG" id="COG0193">
    <property type="taxonomic scope" value="Bacteria"/>
</dbReference>
<dbReference type="HOGENOM" id="CLU_062456_4_1_7"/>
<dbReference type="Proteomes" id="UP000000422">
    <property type="component" value="Chromosome"/>
</dbReference>
<dbReference type="GO" id="GO:0005737">
    <property type="term" value="C:cytoplasm"/>
    <property type="evidence" value="ECO:0007669"/>
    <property type="project" value="UniProtKB-SubCell"/>
</dbReference>
<dbReference type="GO" id="GO:0004045">
    <property type="term" value="F:peptidyl-tRNA hydrolase activity"/>
    <property type="evidence" value="ECO:0007669"/>
    <property type="project" value="UniProtKB-UniRule"/>
</dbReference>
<dbReference type="GO" id="GO:0000049">
    <property type="term" value="F:tRNA binding"/>
    <property type="evidence" value="ECO:0007669"/>
    <property type="project" value="UniProtKB-UniRule"/>
</dbReference>
<dbReference type="GO" id="GO:0006515">
    <property type="term" value="P:protein quality control for misfolded or incompletely synthesized proteins"/>
    <property type="evidence" value="ECO:0007669"/>
    <property type="project" value="UniProtKB-UniRule"/>
</dbReference>
<dbReference type="GO" id="GO:0072344">
    <property type="term" value="P:rescue of stalled ribosome"/>
    <property type="evidence" value="ECO:0007669"/>
    <property type="project" value="UniProtKB-UniRule"/>
</dbReference>
<dbReference type="CDD" id="cd00462">
    <property type="entry name" value="PTH"/>
    <property type="match status" value="1"/>
</dbReference>
<dbReference type="FunFam" id="3.40.50.1470:FF:000001">
    <property type="entry name" value="Peptidyl-tRNA hydrolase"/>
    <property type="match status" value="1"/>
</dbReference>
<dbReference type="Gene3D" id="3.40.50.1470">
    <property type="entry name" value="Peptidyl-tRNA hydrolase"/>
    <property type="match status" value="1"/>
</dbReference>
<dbReference type="HAMAP" id="MF_00083">
    <property type="entry name" value="Pept_tRNA_hydro_bact"/>
    <property type="match status" value="1"/>
</dbReference>
<dbReference type="InterPro" id="IPR001328">
    <property type="entry name" value="Pept_tRNA_hydro"/>
</dbReference>
<dbReference type="InterPro" id="IPR018171">
    <property type="entry name" value="Pept_tRNA_hydro_CS"/>
</dbReference>
<dbReference type="InterPro" id="IPR036416">
    <property type="entry name" value="Pept_tRNA_hydro_sf"/>
</dbReference>
<dbReference type="NCBIfam" id="TIGR00447">
    <property type="entry name" value="pth"/>
    <property type="match status" value="1"/>
</dbReference>
<dbReference type="PANTHER" id="PTHR17224">
    <property type="entry name" value="PEPTIDYL-TRNA HYDROLASE"/>
    <property type="match status" value="1"/>
</dbReference>
<dbReference type="PANTHER" id="PTHR17224:SF1">
    <property type="entry name" value="PEPTIDYL-TRNA HYDROLASE"/>
    <property type="match status" value="1"/>
</dbReference>
<dbReference type="Pfam" id="PF01195">
    <property type="entry name" value="Pept_tRNA_hydro"/>
    <property type="match status" value="1"/>
</dbReference>
<dbReference type="SUPFAM" id="SSF53178">
    <property type="entry name" value="Peptidyl-tRNA hydrolase-like"/>
    <property type="match status" value="1"/>
</dbReference>
<dbReference type="PROSITE" id="PS01195">
    <property type="entry name" value="PEPT_TRNA_HYDROL_1"/>
    <property type="match status" value="1"/>
</dbReference>
<dbReference type="PROSITE" id="PS01196">
    <property type="entry name" value="PEPT_TRNA_HYDROL_2"/>
    <property type="match status" value="1"/>
</dbReference>
<accession>Q7M7U8</accession>
<keyword id="KW-0963">Cytoplasm</keyword>
<keyword id="KW-0378">Hydrolase</keyword>
<keyword id="KW-1185">Reference proteome</keyword>
<keyword id="KW-0694">RNA-binding</keyword>
<keyword id="KW-0820">tRNA-binding</keyword>
<comment type="function">
    <text evidence="1">Hydrolyzes ribosome-free peptidyl-tRNAs (with 1 or more amino acids incorporated), which drop off the ribosome during protein synthesis, or as a result of ribosome stalling.</text>
</comment>
<comment type="function">
    <text evidence="1">Catalyzes the release of premature peptidyl moieties from peptidyl-tRNA molecules trapped in stalled 50S ribosomal subunits, and thus maintains levels of free tRNAs and 50S ribosomes.</text>
</comment>
<comment type="catalytic activity">
    <reaction evidence="1">
        <text>an N-acyl-L-alpha-aminoacyl-tRNA + H2O = an N-acyl-L-amino acid + a tRNA + H(+)</text>
        <dbReference type="Rhea" id="RHEA:54448"/>
        <dbReference type="Rhea" id="RHEA-COMP:10123"/>
        <dbReference type="Rhea" id="RHEA-COMP:13883"/>
        <dbReference type="ChEBI" id="CHEBI:15377"/>
        <dbReference type="ChEBI" id="CHEBI:15378"/>
        <dbReference type="ChEBI" id="CHEBI:59874"/>
        <dbReference type="ChEBI" id="CHEBI:78442"/>
        <dbReference type="ChEBI" id="CHEBI:138191"/>
        <dbReference type="EC" id="3.1.1.29"/>
    </reaction>
</comment>
<comment type="subunit">
    <text evidence="1">Monomer.</text>
</comment>
<comment type="subcellular location">
    <subcellularLocation>
        <location evidence="1">Cytoplasm</location>
    </subcellularLocation>
</comment>
<comment type="similarity">
    <text evidence="1">Belongs to the PTH family.</text>
</comment>
<organism>
    <name type="scientific">Wolinella succinogenes (strain ATCC 29543 / DSM 1740 / CCUG 13145 / JCM 31913 / LMG 7466 / NCTC 11488 / FDC 602W)</name>
    <name type="common">Vibrio succinogenes</name>
    <dbReference type="NCBI Taxonomy" id="273121"/>
    <lineage>
        <taxon>Bacteria</taxon>
        <taxon>Pseudomonadati</taxon>
        <taxon>Campylobacterota</taxon>
        <taxon>Epsilonproteobacteria</taxon>
        <taxon>Campylobacterales</taxon>
        <taxon>Helicobacteraceae</taxon>
        <taxon>Wolinella</taxon>
    </lineage>
</organism>
<proteinExistence type="inferred from homology"/>